<gene>
    <name evidence="14" type="primary">ALE1</name>
    <name evidence="18" type="synonym">LCA1</name>
    <name evidence="16 17" type="synonym">LPT1</name>
    <name evidence="15" type="synonym">SLC4</name>
    <name type="ordered locus">YOR175C</name>
    <name type="ORF">O3635</name>
</gene>
<reference key="1">
    <citation type="journal article" date="1997" name="Nature">
        <title>The nucleotide sequence of Saccharomyces cerevisiae chromosome XV.</title>
        <authorList>
            <person name="Dujon B."/>
            <person name="Albermann K."/>
            <person name="Aldea M."/>
            <person name="Alexandraki D."/>
            <person name="Ansorge W."/>
            <person name="Arino J."/>
            <person name="Benes V."/>
            <person name="Bohn C."/>
            <person name="Bolotin-Fukuhara M."/>
            <person name="Bordonne R."/>
            <person name="Boyer J."/>
            <person name="Camasses A."/>
            <person name="Casamayor A."/>
            <person name="Casas C."/>
            <person name="Cheret G."/>
            <person name="Cziepluch C."/>
            <person name="Daignan-Fornier B."/>
            <person name="Dang V.-D."/>
            <person name="de Haan M."/>
            <person name="Delius H."/>
            <person name="Durand P."/>
            <person name="Fairhead C."/>
            <person name="Feldmann H."/>
            <person name="Gaillon L."/>
            <person name="Galisson F."/>
            <person name="Gamo F.-J."/>
            <person name="Gancedo C."/>
            <person name="Goffeau A."/>
            <person name="Goulding S.E."/>
            <person name="Grivell L.A."/>
            <person name="Habbig B."/>
            <person name="Hand N.J."/>
            <person name="Hani J."/>
            <person name="Hattenhorst U."/>
            <person name="Hebling U."/>
            <person name="Hernando Y."/>
            <person name="Herrero E."/>
            <person name="Heumann K."/>
            <person name="Hiesel R."/>
            <person name="Hilger F."/>
            <person name="Hofmann B."/>
            <person name="Hollenberg C.P."/>
            <person name="Hughes B."/>
            <person name="Jauniaux J.-C."/>
            <person name="Kalogeropoulos A."/>
            <person name="Katsoulou C."/>
            <person name="Kordes E."/>
            <person name="Lafuente M.J."/>
            <person name="Landt O."/>
            <person name="Louis E.J."/>
            <person name="Maarse A.C."/>
            <person name="Madania A."/>
            <person name="Mannhaupt G."/>
            <person name="Marck C."/>
            <person name="Martin R.P."/>
            <person name="Mewes H.-W."/>
            <person name="Michaux G."/>
            <person name="Paces V."/>
            <person name="Parle-McDermott A.G."/>
            <person name="Pearson B.M."/>
            <person name="Perrin A."/>
            <person name="Pettersson B."/>
            <person name="Poch O."/>
            <person name="Pohl T.M."/>
            <person name="Poirey R."/>
            <person name="Portetelle D."/>
            <person name="Pujol A."/>
            <person name="Purnelle B."/>
            <person name="Ramezani Rad M."/>
            <person name="Rechmann S."/>
            <person name="Schwager C."/>
            <person name="Schweizer M."/>
            <person name="Sor F."/>
            <person name="Sterky F."/>
            <person name="Tarassov I.A."/>
            <person name="Teodoru C."/>
            <person name="Tettelin H."/>
            <person name="Thierry A."/>
            <person name="Tobiasch E."/>
            <person name="Tzermia M."/>
            <person name="Uhlen M."/>
            <person name="Unseld M."/>
            <person name="Valens M."/>
            <person name="Vandenbol M."/>
            <person name="Vetter I."/>
            <person name="Vlcek C."/>
            <person name="Voet M."/>
            <person name="Volckaert G."/>
            <person name="Voss H."/>
            <person name="Wambutt R."/>
            <person name="Wedler H."/>
            <person name="Wiemann S."/>
            <person name="Winsor B."/>
            <person name="Wolfe K.H."/>
            <person name="Zollner A."/>
            <person name="Zumstein E."/>
            <person name="Kleine K."/>
        </authorList>
    </citation>
    <scope>NUCLEOTIDE SEQUENCE [LARGE SCALE GENOMIC DNA]</scope>
    <source>
        <strain>ATCC 204508 / S288c</strain>
    </source>
</reference>
<reference key="2">
    <citation type="journal article" date="2014" name="G3 (Bethesda)">
        <title>The reference genome sequence of Saccharomyces cerevisiae: Then and now.</title>
        <authorList>
            <person name="Engel S.R."/>
            <person name="Dietrich F.S."/>
            <person name="Fisk D.G."/>
            <person name="Binkley G."/>
            <person name="Balakrishnan R."/>
            <person name="Costanzo M.C."/>
            <person name="Dwight S.S."/>
            <person name="Hitz B.C."/>
            <person name="Karra K."/>
            <person name="Nash R.S."/>
            <person name="Weng S."/>
            <person name="Wong E.D."/>
            <person name="Lloyd P."/>
            <person name="Skrzypek M.S."/>
            <person name="Miyasato S.R."/>
            <person name="Simison M."/>
            <person name="Cherry J.M."/>
        </authorList>
    </citation>
    <scope>GENOME REANNOTATION</scope>
    <source>
        <strain>ATCC 204508 / S288c</strain>
    </source>
</reference>
<reference key="3">
    <citation type="journal article" date="1996" name="Yeast">
        <title>Analysis of a 22,956 bp region on the right arm of Saccharomyces cerevisiae chromosome XV.</title>
        <authorList>
            <person name="Madania A."/>
            <person name="Poch O."/>
            <person name="Tarassov I.A."/>
            <person name="Winsor B."/>
            <person name="Martin R.P."/>
        </authorList>
    </citation>
    <scope>NUCLEOTIDE SEQUENCE [GENOMIC DNA] OF 270-619</scope>
    <source>
        <strain>S288c / FY1678</strain>
    </source>
</reference>
<reference key="4">
    <citation type="journal article" date="2000" name="Trends Biochem. Sci.">
        <title>A superfamily of membrane-bound O-acyltransferases with implications for wnt signaling.</title>
        <authorList>
            <person name="Hofmann K."/>
        </authorList>
    </citation>
    <scope>SIMILARITY</scope>
</reference>
<reference key="5">
    <citation type="journal article" date="2003" name="Nature">
        <title>Global analysis of protein localization in budding yeast.</title>
        <authorList>
            <person name="Huh W.-K."/>
            <person name="Falvo J.V."/>
            <person name="Gerke L.C."/>
            <person name="Carroll A.S."/>
            <person name="Howson R.W."/>
            <person name="Weissman J.S."/>
            <person name="O'Shea E.K."/>
        </authorList>
    </citation>
    <scope>SUBCELLULAR LOCATION [LARGE SCALE ANALYSIS]</scope>
</reference>
<reference key="6">
    <citation type="journal article" date="2006" name="Proc. Natl. Acad. Sci. U.S.A.">
        <title>A global topology map of the Saccharomyces cerevisiae membrane proteome.</title>
        <authorList>
            <person name="Kim H."/>
            <person name="Melen K."/>
            <person name="Oesterberg M."/>
            <person name="von Heijne G."/>
        </authorList>
    </citation>
    <scope>TOPOLOGY [LARGE SCALE ANALYSIS]</scope>
    <source>
        <strain>ATCC 208353 / W303-1A</strain>
    </source>
</reference>
<reference key="7">
    <citation type="journal article" date="2007" name="FEBS Lett.">
        <title>The yeast acylglycerol acyltransferase LCA1 is a key component of Lands cycle for phosphatidylcholine turnover.</title>
        <authorList>
            <person name="Chen Q."/>
            <person name="Kazachkov M."/>
            <person name="Zheng Z."/>
            <person name="Zou J."/>
        </authorList>
    </citation>
    <scope>FUNCTION</scope>
</reference>
<reference key="8">
    <citation type="journal article" date="2007" name="J. Biol. Chem.">
        <title>Identification and characterization of the major lysophosphatidylethanolamine acyltransferase in Saccharomyces cerevisiae.</title>
        <authorList>
            <person name="Riekhof W.R."/>
            <person name="Wu J."/>
            <person name="Jones J.L."/>
            <person name="Voelker D.R."/>
        </authorList>
    </citation>
    <scope>FUNCTION</scope>
    <scope>CATALYTIC ACTIVITY</scope>
    <scope>SUBCELLULAR LOCATION</scope>
    <scope>BIOPHYSICOCHEMICAL PROPERTIES</scope>
    <scope>SUBSTRATE SPECIFICITY</scope>
</reference>
<reference key="9">
    <citation type="journal article" date="2007" name="J. Biol. Chem.">
        <title>Identification of a novel lysophospholipid acyltransferase in Saccharomyces cerevisiae.</title>
        <authorList>
            <person name="Jain S."/>
            <person name="Stanford N."/>
            <person name="Bhagwat N."/>
            <person name="Seiler B."/>
            <person name="Costanzo M."/>
            <person name="Boone C."/>
            <person name="Oelkers P."/>
        </authorList>
    </citation>
    <scope>FUNCTION</scope>
    <scope>CATALYTIC ACTIVITY</scope>
    <scope>SUBCELLULAR LOCATION</scope>
</reference>
<reference key="10">
    <citation type="journal article" date="2007" name="J. Biol. Chem.">
        <title>SLC1 and SLC4 encode partially redundant acyl-coenzyme A 1-acylglycerol-3-phosphate O-acyltransferases of budding yeast.</title>
        <authorList>
            <person name="Benghezal M."/>
            <person name="Roubaty C."/>
            <person name="Veepuri V."/>
            <person name="Knudsen J."/>
            <person name="Conzelmann A."/>
        </authorList>
    </citation>
    <scope>FUNCTION</scope>
</reference>
<reference key="11">
    <citation type="journal article" date="2007" name="J. Biol. Chem.">
        <title>LPT1 encodes a membrane-bound O-acyltransferase involved in the acylation of lysophospholipids in the yeast Saccharomyces cerevisiae.</title>
        <authorList>
            <person name="Tamaki H."/>
            <person name="Shimada A."/>
            <person name="Itoh Y."/>
            <person name="Ohya M."/>
            <person name="Takase J."/>
            <person name="Miyashita M."/>
            <person name="Miyagawa H."/>
            <person name="Nozaki H."/>
            <person name="Nakayama R."/>
            <person name="Kumagai H."/>
        </authorList>
    </citation>
    <scope>FUNCTION</scope>
    <scope>CATALYTIC ACTIVITY</scope>
    <scope>SUBCELLULAR LOCATION</scope>
    <scope>MUTAGENESIS OF HIS-382</scope>
    <scope>BIOPHYSICOCHEMICAL PROPERTIES</scope>
    <scope>SUBSTRATE SPECIFICITY</scope>
</reference>
<reference key="12">
    <citation type="journal article" date="2007" name="J. Proteome Res.">
        <title>Large-scale phosphorylation analysis of alpha-factor-arrested Saccharomyces cerevisiae.</title>
        <authorList>
            <person name="Li X."/>
            <person name="Gerber S.A."/>
            <person name="Rudner A.D."/>
            <person name="Beausoleil S.A."/>
            <person name="Haas W."/>
            <person name="Villen J."/>
            <person name="Elias J.E."/>
            <person name="Gygi S.P."/>
        </authorList>
    </citation>
    <scope>PHOSPHORYLATION [LARGE SCALE ANALYSIS] AT SER-513 AND SER-605</scope>
    <scope>IDENTIFICATION BY MASS SPECTROMETRY [LARGE SCALE ANALYSIS]</scope>
    <source>
        <strain>ADR376</strain>
    </source>
</reference>
<reference key="13">
    <citation type="journal article" date="2007" name="Proc. Natl. Acad. Sci. U.S.A.">
        <title>Analysis of phosphorylation sites on proteins from Saccharomyces cerevisiae by electron transfer dissociation (ETD) mass spectrometry.</title>
        <authorList>
            <person name="Chi A."/>
            <person name="Huttenhower C."/>
            <person name="Geer L.Y."/>
            <person name="Coon J.J."/>
            <person name="Syka J.E.P."/>
            <person name="Bai D.L."/>
            <person name="Shabanowitz J."/>
            <person name="Burke D.J."/>
            <person name="Troyanskaya O.G."/>
            <person name="Hunt D.F."/>
        </authorList>
    </citation>
    <scope>PHOSPHORYLATION [LARGE SCALE ANALYSIS] AT SER-605</scope>
    <scope>IDENTIFICATION BY MASS SPECTROMETRY [LARGE SCALE ANALYSIS]</scope>
</reference>
<reference key="14">
    <citation type="journal article" date="2008" name="FEBS Lett.">
        <title>A family of eukaryotic lysophospholipid acyltransferases with broad specificity.</title>
        <authorList>
            <person name="Stahl U."/>
            <person name="Stalberg K."/>
            <person name="Stymne S."/>
            <person name="Ronne H."/>
        </authorList>
    </citation>
    <scope>CATALYTIC ACTIVITY</scope>
</reference>
<reference key="15">
    <citation type="journal article" date="2008" name="Mol. Cell. Proteomics">
        <title>A multidimensional chromatography technology for in-depth phosphoproteome analysis.</title>
        <authorList>
            <person name="Albuquerque C.P."/>
            <person name="Smolka M.B."/>
            <person name="Payne S.H."/>
            <person name="Bafna V."/>
            <person name="Eng J."/>
            <person name="Zhou H."/>
        </authorList>
    </citation>
    <scope>IDENTIFICATION BY MASS SPECTROMETRY [LARGE SCALE ANALYSIS]</scope>
</reference>
<reference key="16">
    <citation type="journal article" date="2009" name="Science">
        <title>Global analysis of Cdk1 substrate phosphorylation sites provides insights into evolution.</title>
        <authorList>
            <person name="Holt L.J."/>
            <person name="Tuch B.B."/>
            <person name="Villen J."/>
            <person name="Johnson A.D."/>
            <person name="Gygi S.P."/>
            <person name="Morgan D.O."/>
        </authorList>
    </citation>
    <scope>PHOSPHORYLATION [LARGE SCALE ANALYSIS] AT SER-513; SER-605; SER-610 AND SER-615</scope>
    <scope>IDENTIFICATION BY MASS SPECTROMETRY [LARGE SCALE ANALYSIS]</scope>
</reference>
<reference key="17">
    <citation type="journal article" date="2015" name="J. Lipid Res.">
        <title>Saccharomyces cerevisiae lysophospholipid acyltransferase, Lpt1, requires Asp146 and Glu297 for catalysis.</title>
        <authorList>
            <person name="Renauer P."/>
            <person name="Nasiri N."/>
            <person name="Oelkers P."/>
        </authorList>
    </citation>
    <scope>CATALYTIC ACTIVITY</scope>
    <scope>ACTIVE SITE</scope>
    <scope>MUTAGENESIS OF ASP-146 AND GLU-297</scope>
</reference>
<reference key="18">
    <citation type="journal article" date="2016" name="Lipids">
        <title>Possible role of different yeast and plant lysophospholipid:acyl-CoA acyltransferases (LPLATs) in acyl remodelling of phospholipids.</title>
        <authorList>
            <person name="Jasieniecka-Gazarkiewicz K."/>
            <person name="Demski K."/>
            <person name="Lager I."/>
            <person name="Stymne S."/>
            <person name="Banas A."/>
        </authorList>
    </citation>
    <scope>CATALYTIC ACTIVITY</scope>
</reference>
<reference key="19">
    <citation type="journal article" date="2018" name="FEBS Lett.">
        <title>The membrane-bound O-acyltransferase Ale1 transfers an acyl moiety to newly synthesized 2-alkyl-sn-glycero-3-phosphocholine in yeast.</title>
        <authorList>
            <person name="Morisada S."/>
            <person name="Ono Y."/>
            <person name="Kodaira T."/>
            <person name="Kishino H."/>
            <person name="Ninomiya R."/>
            <person name="Mori N."/>
            <person name="Watanabe H."/>
            <person name="Ohta A."/>
            <person name="Horiuchi H."/>
            <person name="Fukuda R."/>
        </authorList>
    </citation>
    <scope>FUNCTION</scope>
</reference>
<protein>
    <recommendedName>
        <fullName evidence="19">Lysophospholipid acyltransferase</fullName>
        <shortName>LPLAT</shortName>
        <ecNumber evidence="8">2.3.1.23</ecNumber>
        <ecNumber evidence="8 10">2.3.1.51</ecNumber>
        <ecNumber evidence="8">2.3.1.n6</ecNumber>
        <ecNumber evidence="8">2.3.1.n7</ecNumber>
    </recommendedName>
    <alternativeName>
        <fullName evidence="16">1-acyl-sn-glycerol-3-phosphate acyltransferase</fullName>
        <shortName>AGPAT</shortName>
    </alternativeName>
    <alternativeName>
        <fullName>Lysophosphatidic acid acyltransferase</fullName>
        <shortName>LPAAT</shortName>
    </alternativeName>
    <alternativeName>
        <fullName evidence="16">Lysophosphatidylcholine acyltransferase</fullName>
        <shortName>LPCAT</shortName>
    </alternativeName>
    <alternativeName>
        <fullName evidence="14">Lysophosphatidylethanolamine acyltransferase</fullName>
        <shortName>LPEAT</shortName>
    </alternativeName>
    <alternativeName>
        <fullName>Lysophosphatidylserine acyltransferase</fullName>
        <shortName>LPSAT</shortName>
    </alternativeName>
    <alternativeName>
        <fullName evidence="15">Sphingolipid compensation protein 4</fullName>
    </alternativeName>
</protein>
<proteinExistence type="evidence at protein level"/>
<keyword id="KW-0012">Acyltransferase</keyword>
<keyword id="KW-0175">Coiled coil</keyword>
<keyword id="KW-0256">Endoplasmic reticulum</keyword>
<keyword id="KW-0444">Lipid biosynthesis</keyword>
<keyword id="KW-0443">Lipid metabolism</keyword>
<keyword id="KW-0472">Membrane</keyword>
<keyword id="KW-0594">Phospholipid biosynthesis</keyword>
<keyword id="KW-1208">Phospholipid metabolism</keyword>
<keyword id="KW-0597">Phosphoprotein</keyword>
<keyword id="KW-1185">Reference proteome</keyword>
<keyword id="KW-0808">Transferase</keyword>
<keyword id="KW-0812">Transmembrane</keyword>
<keyword id="KW-1133">Transmembrane helix</keyword>
<evidence type="ECO:0000255" key="1"/>
<evidence type="ECO:0000256" key="2">
    <source>
        <dbReference type="SAM" id="MobiDB-lite"/>
    </source>
</evidence>
<evidence type="ECO:0000269" key="3">
    <source>
    </source>
</evidence>
<evidence type="ECO:0000269" key="4">
    <source>
    </source>
</evidence>
<evidence type="ECO:0000269" key="5">
    <source>
    </source>
</evidence>
<evidence type="ECO:0000269" key="6">
    <source>
    </source>
</evidence>
<evidence type="ECO:0000269" key="7">
    <source>
    </source>
</evidence>
<evidence type="ECO:0000269" key="8">
    <source>
    </source>
</evidence>
<evidence type="ECO:0000269" key="9">
    <source>
    </source>
</evidence>
<evidence type="ECO:0000269" key="10">
    <source>
    </source>
</evidence>
<evidence type="ECO:0000269" key="11">
    <source>
    </source>
</evidence>
<evidence type="ECO:0000269" key="12">
    <source>
    </source>
</evidence>
<evidence type="ECO:0000269" key="13">
    <source>
    </source>
</evidence>
<evidence type="ECO:0000303" key="14">
    <source>
    </source>
</evidence>
<evidence type="ECO:0000303" key="15">
    <source>
    </source>
</evidence>
<evidence type="ECO:0000303" key="16">
    <source>
    </source>
</evidence>
<evidence type="ECO:0000303" key="17">
    <source>
    </source>
</evidence>
<evidence type="ECO:0000303" key="18">
    <source>
    </source>
</evidence>
<evidence type="ECO:0000305" key="19"/>
<evidence type="ECO:0000305" key="20">
    <source>
    </source>
</evidence>
<evidence type="ECO:0000305" key="21">
    <source>
    </source>
</evidence>
<evidence type="ECO:0000305" key="22">
    <source>
    </source>
</evidence>
<evidence type="ECO:0000305" key="23">
    <source>
    </source>
</evidence>
<evidence type="ECO:0000305" key="24">
    <source>
    </source>
</evidence>
<evidence type="ECO:0000305" key="25">
    <source>
    </source>
</evidence>
<evidence type="ECO:0007744" key="26">
    <source>
    </source>
</evidence>
<evidence type="ECO:0007744" key="27">
    <source>
    </source>
</evidence>
<evidence type="ECO:0007744" key="28">
    <source>
    </source>
</evidence>
<organism>
    <name type="scientific">Saccharomyces cerevisiae (strain ATCC 204508 / S288c)</name>
    <name type="common">Baker's yeast</name>
    <dbReference type="NCBI Taxonomy" id="559292"/>
    <lineage>
        <taxon>Eukaryota</taxon>
        <taxon>Fungi</taxon>
        <taxon>Dikarya</taxon>
        <taxon>Ascomycota</taxon>
        <taxon>Saccharomycotina</taxon>
        <taxon>Saccharomycetes</taxon>
        <taxon>Saccharomycetales</taxon>
        <taxon>Saccharomycetaceae</taxon>
        <taxon>Saccharomyces</taxon>
    </lineage>
</organism>
<comment type="function">
    <text evidence="5 6 7 8 9 13">Broad specificity membrane-bound O-acyltransferase that mediates the incorporation of unsaturated acyl chains into the sn-2 position of various lysophospholipids. Preferentially acylates lysophosphocholine (LPC), but also lysophosphoethanolamine (LPE), lysophosphatidylglycerol (LPG), lysophosphatidic acid (LPA), lysophosphoethanolamine (LPE), lysophosphoinositol (LPI), and lysophosphoserine (LPS) (PubMed:17652094, PubMed:17675291, PubMed:17726007, PubMed:17890783, PubMed:17996202). Prefers an acyl residue to an alkyl residue at the sn-1 position of lysophospholipid acceptors. Accepts acyl chains in acyl-CoA from C-2 to C-20, and shows strong preference for unsaturated acyl-CoAs with 16-20 carbons (PubMed:17890783). Together with SLC1, plays a central role in phosphatidic acid (PA) biosynthesis. PA is the intermediate, from which all glycerophospholipids are synthesized (PubMed:17890783). Can also introduce an acyl chain at the sn-1 position of the lysophosphatidylcholine analog 1-hydroxy-2-hexadecyl-sn-glycero-3-phosphocholine (HHPC) (PubMed:29782033).</text>
</comment>
<comment type="catalytic activity">
    <reaction evidence="8 10 12">
        <text>a 1-acyl-sn-glycero-3-phosphate + an acyl-CoA = a 1,2-diacyl-sn-glycero-3-phosphate + CoA</text>
        <dbReference type="Rhea" id="RHEA:19709"/>
        <dbReference type="ChEBI" id="CHEBI:57287"/>
        <dbReference type="ChEBI" id="CHEBI:57970"/>
        <dbReference type="ChEBI" id="CHEBI:58342"/>
        <dbReference type="ChEBI" id="CHEBI:58608"/>
        <dbReference type="EC" id="2.3.1.51"/>
    </reaction>
    <physiologicalReaction direction="left-to-right" evidence="12 23 24">
        <dbReference type="Rhea" id="RHEA:19710"/>
    </physiologicalReaction>
</comment>
<comment type="catalytic activity">
    <reaction evidence="8 12">
        <text>a 1-acyl-sn-glycero-3-phosphocholine + an acyl-CoA = a 1,2-diacyl-sn-glycero-3-phosphocholine + CoA</text>
        <dbReference type="Rhea" id="RHEA:12937"/>
        <dbReference type="ChEBI" id="CHEBI:57287"/>
        <dbReference type="ChEBI" id="CHEBI:57643"/>
        <dbReference type="ChEBI" id="CHEBI:58168"/>
        <dbReference type="ChEBI" id="CHEBI:58342"/>
        <dbReference type="EC" id="2.3.1.23"/>
    </reaction>
    <physiologicalReaction direction="left-to-right" evidence="12">
        <dbReference type="Rhea" id="RHEA:12938"/>
    </physiologicalReaction>
</comment>
<comment type="catalytic activity">
    <reaction evidence="8">
        <text>1-acyl-sn-glycero-3-phospho-(1'-sn-glycerol) + an acyl-CoA = a 1,2-diacyl-sn-glycero-3-phospho-(1'-sn-glycerol) + CoA</text>
        <dbReference type="Rhea" id="RHEA:33203"/>
        <dbReference type="ChEBI" id="CHEBI:57287"/>
        <dbReference type="ChEBI" id="CHEBI:58342"/>
        <dbReference type="ChEBI" id="CHEBI:64716"/>
        <dbReference type="ChEBI" id="CHEBI:64840"/>
    </reaction>
</comment>
<comment type="catalytic activity">
    <reaction evidence="8">
        <text>a 1-acyl-sn-glycero-3-phospho-(1D-myo-inositol) + an acyl-CoA = a 1,2-diacyl-sn-glycero-3-phospho-(1D-myo-inositol) + CoA</text>
        <dbReference type="Rhea" id="RHEA:33195"/>
        <dbReference type="ChEBI" id="CHEBI:57287"/>
        <dbReference type="ChEBI" id="CHEBI:57880"/>
        <dbReference type="ChEBI" id="CHEBI:58342"/>
        <dbReference type="ChEBI" id="CHEBI:64771"/>
    </reaction>
</comment>
<comment type="catalytic activity">
    <reaction evidence="8">
        <text>a 1-acyl-sn-glycero-3-phospho-L-serine + an acyl-CoA = a 1,2-diacyl-sn-glycero-3-phospho-L-serine + CoA</text>
        <dbReference type="Rhea" id="RHEA:33191"/>
        <dbReference type="ChEBI" id="CHEBI:57262"/>
        <dbReference type="ChEBI" id="CHEBI:57287"/>
        <dbReference type="ChEBI" id="CHEBI:58342"/>
        <dbReference type="ChEBI" id="CHEBI:64379"/>
        <dbReference type="EC" id="2.3.1.n6"/>
    </reaction>
</comment>
<comment type="catalytic activity">
    <reaction evidence="8 12">
        <text>a 1-acyl-sn-glycero-3-phosphoethanolamine + an acyl-CoA = a 1,2-diacyl-sn-glycero-3-phosphoethanolamine + CoA</text>
        <dbReference type="Rhea" id="RHEA:32995"/>
        <dbReference type="ChEBI" id="CHEBI:57287"/>
        <dbReference type="ChEBI" id="CHEBI:58342"/>
        <dbReference type="ChEBI" id="CHEBI:64381"/>
        <dbReference type="ChEBI" id="CHEBI:64612"/>
        <dbReference type="EC" id="2.3.1.n7"/>
    </reaction>
    <physiologicalReaction direction="left-to-right" evidence="12">
        <dbReference type="Rhea" id="RHEA:32996"/>
    </physiologicalReaction>
</comment>
<comment type="catalytic activity">
    <reaction evidence="5">
        <text>1-(9Z-octadecenoyl)-sn-glycero-3-phosphoethanolamine + (9Z)-octadecenoyl-CoA = 1,2-di-(9Z-octadecenoyl)-sn-glycero-3-phosphoethanolamine + CoA</text>
        <dbReference type="Rhea" id="RHEA:37499"/>
        <dbReference type="ChEBI" id="CHEBI:57287"/>
        <dbReference type="ChEBI" id="CHEBI:57387"/>
        <dbReference type="ChEBI" id="CHEBI:74971"/>
        <dbReference type="ChEBI" id="CHEBI:74986"/>
    </reaction>
    <physiologicalReaction direction="left-to-right" evidence="21">
        <dbReference type="Rhea" id="RHEA:37500"/>
    </physiologicalReaction>
</comment>
<comment type="catalytic activity">
    <reaction evidence="5">
        <text>1-(9Z-octadecenoyl)-sn-glycero-3-phosphoethanolamine + (9Z)-hexadecenoyl-CoA = 1-(9Z)-octadecenoyl-2-(9Z)-hexadecenoyl-sn-glycero-3-phosphoethanolamine + CoA</text>
        <dbReference type="Rhea" id="RHEA:42232"/>
        <dbReference type="ChEBI" id="CHEBI:57287"/>
        <dbReference type="ChEBI" id="CHEBI:61540"/>
        <dbReference type="ChEBI" id="CHEBI:74971"/>
        <dbReference type="ChEBI" id="CHEBI:78810"/>
    </reaction>
    <physiologicalReaction direction="left-to-right" evidence="21">
        <dbReference type="Rhea" id="RHEA:42233"/>
    </physiologicalReaction>
</comment>
<comment type="catalytic activity">
    <reaction evidence="5">
        <text>1-(9Z-octadecenoyl)-sn-glycero-3-phosphoethanolamine + hexadecanoyl-CoA = 1-(9Z-octadecenoyl)-2-hexadecanoyl-sn-glycero-3-phosphoethanolamine + CoA</text>
        <dbReference type="Rhea" id="RHEA:42236"/>
        <dbReference type="ChEBI" id="CHEBI:57287"/>
        <dbReference type="ChEBI" id="CHEBI:57379"/>
        <dbReference type="ChEBI" id="CHEBI:74971"/>
        <dbReference type="ChEBI" id="CHEBI:78813"/>
    </reaction>
    <physiologicalReaction direction="left-to-right" evidence="21">
        <dbReference type="Rhea" id="RHEA:42237"/>
    </physiologicalReaction>
</comment>
<comment type="catalytic activity">
    <reaction evidence="5">
        <text>1-(9Z-octadecenoyl)-sn-glycero-3-phosphoethanolamine + tetradecanoyl-CoA = 1-(9Z)-octadecenoyl-2-tetradecanoyl-sn-glycero-3-phosphoethanolamine + CoA</text>
        <dbReference type="Rhea" id="RHEA:42240"/>
        <dbReference type="ChEBI" id="CHEBI:57287"/>
        <dbReference type="ChEBI" id="CHEBI:57385"/>
        <dbReference type="ChEBI" id="CHEBI:74971"/>
        <dbReference type="ChEBI" id="CHEBI:78814"/>
    </reaction>
    <physiologicalReaction direction="left-to-right" evidence="21">
        <dbReference type="Rhea" id="RHEA:42241"/>
    </physiologicalReaction>
</comment>
<comment type="catalytic activity">
    <reaction evidence="5">
        <text>1-(9Z-octadecenoyl)-sn-glycero-3-phosphate + (9Z)-octadecenoyl-CoA = 1,2-di-(9Z-octadecenoyl)-sn-glycero-3-phosphate + CoA</text>
        <dbReference type="Rhea" id="RHEA:37131"/>
        <dbReference type="ChEBI" id="CHEBI:57287"/>
        <dbReference type="ChEBI" id="CHEBI:57387"/>
        <dbReference type="ChEBI" id="CHEBI:74544"/>
        <dbReference type="ChEBI" id="CHEBI:74546"/>
    </reaction>
    <physiologicalReaction direction="left-to-right" evidence="21">
        <dbReference type="Rhea" id="RHEA:37132"/>
    </physiologicalReaction>
</comment>
<comment type="catalytic activity">
    <reaction evidence="7">
        <text>(9Z)-hexadecenoyl-CoA + 1-hexadecanoyl-sn-glycero-3-phosphocholine = 1-hexadecanoyl-2-(9Z-hexadecenoyl)-sn-glycero-3-phosphocholine + CoA</text>
        <dbReference type="Rhea" id="RHEA:37207"/>
        <dbReference type="ChEBI" id="CHEBI:57287"/>
        <dbReference type="ChEBI" id="CHEBI:61540"/>
        <dbReference type="ChEBI" id="CHEBI:72998"/>
        <dbReference type="ChEBI" id="CHEBI:74000"/>
    </reaction>
    <physiologicalReaction direction="left-to-right" evidence="22">
        <dbReference type="Rhea" id="RHEA:37208"/>
    </physiologicalReaction>
</comment>
<comment type="catalytic activity">
    <reaction evidence="7 11">
        <text>1-hexadecanoyl-sn-glycero-3-phosphocholine + (9Z)-octadecenoyl-CoA = 1-hexadecanoyl-2-(9Z-octadecenoyl)-sn-glycero-3-phosphocholine + CoA</text>
        <dbReference type="Rhea" id="RHEA:35991"/>
        <dbReference type="ChEBI" id="CHEBI:57287"/>
        <dbReference type="ChEBI" id="CHEBI:57387"/>
        <dbReference type="ChEBI" id="CHEBI:72998"/>
        <dbReference type="ChEBI" id="CHEBI:73001"/>
    </reaction>
    <physiologicalReaction direction="left-to-right" evidence="22">
        <dbReference type="Rhea" id="RHEA:35992"/>
    </physiologicalReaction>
</comment>
<comment type="catalytic activity">
    <reaction evidence="7">
        <text>1-tetradecanoyl-sn-glycero-3-phosphoethanolamine + (9Z)-octadecenoyl-CoA = 1-tetradecanoyl-2-(9Z-octadecenoyl)-sn-glycero-3-phosphoethanolamine + CoA</text>
        <dbReference type="Rhea" id="RHEA:44308"/>
        <dbReference type="ChEBI" id="CHEBI:57287"/>
        <dbReference type="ChEBI" id="CHEBI:57387"/>
        <dbReference type="ChEBI" id="CHEBI:84299"/>
        <dbReference type="ChEBI" id="CHEBI:84300"/>
    </reaction>
    <physiologicalReaction direction="left-to-right" evidence="22">
        <dbReference type="Rhea" id="RHEA:44309"/>
    </physiologicalReaction>
</comment>
<comment type="catalytic activity">
    <reaction evidence="7">
        <text>1-(9Z-octadecenoyl)-sn-glycero-3-phospho-L-serine + (9Z)-octadecenoyl-CoA = 1,2-di-(9Z)-octadecenoyl-sn-glycero-3-phospho-L-serine + CoA</text>
        <dbReference type="Rhea" id="RHEA:37407"/>
        <dbReference type="ChEBI" id="CHEBI:57287"/>
        <dbReference type="ChEBI" id="CHEBI:57387"/>
        <dbReference type="ChEBI" id="CHEBI:74617"/>
        <dbReference type="ChEBI" id="CHEBI:74905"/>
    </reaction>
    <physiologicalReaction direction="left-to-right" evidence="22">
        <dbReference type="Rhea" id="RHEA:37408"/>
    </physiologicalReaction>
</comment>
<comment type="catalytic activity">
    <reaction evidence="7">
        <text>a 1-acyl-sn-glycero-3-phospho-(1D-myo-inositol) + (9Z)-octadecenoyl-CoA = a 1-acyl-2-(9Z-octadecenoyl)-sn-glycero-3-phospho-(1D-myo-inositol) + CoA</text>
        <dbReference type="Rhea" id="RHEA:37623"/>
        <dbReference type="ChEBI" id="CHEBI:57287"/>
        <dbReference type="ChEBI" id="CHEBI:57387"/>
        <dbReference type="ChEBI" id="CHEBI:64771"/>
        <dbReference type="ChEBI" id="CHEBI:75116"/>
    </reaction>
    <physiologicalReaction direction="left-to-right" evidence="22">
        <dbReference type="Rhea" id="RHEA:37624"/>
    </physiologicalReaction>
</comment>
<comment type="biophysicochemical properties">
    <kinetics>
        <KM evidence="5">10 uM for oleoyl-CoA (with lysophosphoethanolamine as cosubstrate)</KM>
        <KM evidence="5">17 uM for palmitoleoyl-CoA (with lysophosphoethanolamine as cosubstrate)</KM>
        <KM evidence="5">0.9 uM for palmitoyl-CoA (with lysophosphoethanolamine as cosubstrate)</KM>
        <KM evidence="5">0.4 uM for myristoyl-CoA (with lysophosphoethanolamine as cosubstrate)</KM>
        <KM evidence="7">49 uM for oleoyl-CoA (with lysophosphocholine as cosubstrate)</KM>
        <KM evidence="7">21 uM for palmitoleoyl-CoA (with lysophosphocholine as cosubstrate)</KM>
        <KM evidence="7">1.8 uM for palmitoyl-CoA (with lysophosphocholine as cosubstrate)</KM>
        <KM evidence="7">5.9 uM for stearoyl-CoA (with lysophosphocholine as cosubstrate)</KM>
        <KM evidence="7">11 uM for arachidonyl-CoA (with lysophosphocholine as cosubstrate)</KM>
        <KM evidence="8">23.8 uM for acetyl-CoA (with 1-palmitoyl-lysophosphocholine as cosubstrate)</KM>
        <KM evidence="8">8.7 uM for linoleoyl-CoA (with 1-palmitoyl-lysophosphocholine as cosubstrate)</KM>
        <KM evidence="8">0.467 uM for 1-palmitoyl-lysophosphocholine (with linoleoyl-CoA as cosubstrate)</KM>
        <Vmax evidence="5">38.0 nmol/min/mg enzyme with oleoyl-CoA as substrate (with lysophosphoethanolamine as cosubstrate)</Vmax>
        <Vmax evidence="5">44.0 nmol/min/mg enzyme with palmitoleoyl-CoA as substrate (with lysophosphoethanolamine as cosubstrate)</Vmax>
        <Vmax evidence="5">3.7 nmol/min/mg enzyme with palmitoyl-CoA as substrate (with lysophosphoethanolamine as cosubstrate)</Vmax>
        <Vmax evidence="5">1.2 nmol/min/mg enzyme with myristoyl-CoA as substrate (with lysophosphoethanolamine as cosubstrate)</Vmax>
        <Vmax evidence="7">125.0 nmol/min/mg enzyme with oleoyl-CoA as substrate (with lysophosphocholine as cosubstrate)</Vmax>
        <Vmax evidence="7">142.0 nmol/min/mg enzyme with palmitoleoyl-CoA as substrate (with lysophosphocholine as cosubstrate)</Vmax>
        <Vmax evidence="7">7.8 nmol/min/mg enzyme with palmitoyl-CoA as substrate (with lysophosphocholine as cosubstrate)</Vmax>
        <Vmax evidence="7">12.0 nmol/min/mg enzyme with stearoyl-CoA as substrate (with lysophosphocholine as cosubstrate)</Vmax>
        <Vmax evidence="7">58.0 nmol/min/mg enzyme with arachidonyl-CoA as substrate (with lysophosphocholine as cosubstrate)</Vmax>
    </kinetics>
    <phDependence>
        <text evidence="5">Optimum pH is 6.5-7.5.</text>
    </phDependence>
</comment>
<comment type="pathway">
    <text evidence="23">Lipid metabolism; phospholipid metabolism.</text>
</comment>
<comment type="subcellular location">
    <subcellularLocation>
        <location evidence="3 8">Endoplasmic reticulum membrane</location>
        <topology>Multi-pass membrane protein</topology>
    </subcellularLocation>
</comment>
<comment type="similarity">
    <text evidence="19">Belongs to the membrane-bound acyltransferase family.</text>
</comment>
<feature type="chain" id="PRO_0000245257" description="Lysophospholipid acyltransferase">
    <location>
        <begin position="1"/>
        <end position="619"/>
    </location>
</feature>
<feature type="topological domain" description="Lumenal" evidence="20">
    <location>
        <begin position="1"/>
        <end position="19"/>
    </location>
</feature>
<feature type="transmembrane region" description="Helical" evidence="1">
    <location>
        <begin position="20"/>
        <end position="39"/>
    </location>
</feature>
<feature type="topological domain" description="Cytoplasmic" evidence="20">
    <location>
        <begin position="40"/>
        <end position="51"/>
    </location>
</feature>
<feature type="transmembrane region" description="Helical" evidence="1">
    <location>
        <begin position="52"/>
        <end position="72"/>
    </location>
</feature>
<feature type="topological domain" description="Lumenal" evidence="20">
    <location>
        <begin position="73"/>
        <end position="92"/>
    </location>
</feature>
<feature type="transmembrane region" description="Helical" evidence="1">
    <location>
        <begin position="93"/>
        <end position="113"/>
    </location>
</feature>
<feature type="topological domain" description="Cytoplasmic" evidence="20">
    <location>
        <begin position="114"/>
        <end position="231"/>
    </location>
</feature>
<feature type="transmembrane region" description="Helical" evidence="1">
    <location>
        <begin position="232"/>
        <end position="252"/>
    </location>
</feature>
<feature type="topological domain" description="Lumenal" evidence="20">
    <location>
        <begin position="253"/>
        <end position="274"/>
    </location>
</feature>
<feature type="transmembrane region" description="Helical" evidence="1">
    <location>
        <begin position="275"/>
        <end position="295"/>
    </location>
</feature>
<feature type="topological domain" description="Cytoplasmic" evidence="20">
    <location>
        <begin position="296"/>
        <end position="429"/>
    </location>
</feature>
<feature type="transmembrane region" description="Helical" evidence="1">
    <location>
        <begin position="430"/>
        <end position="450"/>
    </location>
</feature>
<feature type="topological domain" description="Lumenal" evidence="20">
    <location>
        <begin position="451"/>
        <end position="456"/>
    </location>
</feature>
<feature type="transmembrane region" description="Helical" evidence="1">
    <location>
        <begin position="457"/>
        <end position="477"/>
    </location>
</feature>
<feature type="topological domain" description="Cytoplasmic" evidence="4">
    <location>
        <begin position="478"/>
        <end position="619"/>
    </location>
</feature>
<feature type="region of interest" description="Disordered" evidence="2">
    <location>
        <begin position="592"/>
        <end position="619"/>
    </location>
</feature>
<feature type="coiled-coil region" evidence="1">
    <location>
        <begin position="545"/>
        <end position="593"/>
    </location>
</feature>
<feature type="active site" description="Nucleophile" evidence="25">
    <location>
        <position position="146"/>
    </location>
</feature>
<feature type="active site" description="Nucleophile" evidence="25">
    <location>
        <position position="297"/>
    </location>
</feature>
<feature type="active site" evidence="23">
    <location>
        <position position="382"/>
    </location>
</feature>
<feature type="modified residue" description="Phosphoserine" evidence="27 28">
    <location>
        <position position="513"/>
    </location>
</feature>
<feature type="modified residue" description="Phosphoserine" evidence="26 27 28">
    <location>
        <position position="605"/>
    </location>
</feature>
<feature type="modified residue" description="Phosphoserine" evidence="28">
    <location>
        <position position="610"/>
    </location>
</feature>
<feature type="modified residue" description="Phosphoserine" evidence="28">
    <location>
        <position position="615"/>
    </location>
</feature>
<feature type="mutagenesis site" description="Abolishes catalytic activity." evidence="11">
    <original>D</original>
    <variation>L</variation>
    <location>
        <position position="146"/>
    </location>
</feature>
<feature type="mutagenesis site" description="Abolishes catalytic activity." evidence="11">
    <original>E</original>
    <variation>L</variation>
    <location>
        <position position="297"/>
    </location>
</feature>
<feature type="mutagenesis site" description="Abolishes catalytic activity." evidence="8">
    <original>H</original>
    <variation>D</variation>
    <location>
        <position position="382"/>
    </location>
</feature>
<name>ALE1_YEAST</name>
<accession>Q08548</accession>
<accession>D6W2N1</accession>
<accession>Q03130</accession>
<sequence>MYNPVDAVLTKIITNYGIDSFTLRYAICLLGSFPLNAILKRIPEKRIGLKCCFIISMSMFYLFGVLNLVSGFRTLFISTMFTYLISRFYRSKFMPHLNFMFVMGHLAINHIHAQFLNEQTQTTVDITSSQMVLAMKLTSFAWSYYDGSCTSESDFKDLTEHQKSRAVRGHPPLLKFLAYAFFYSTLLTGPSFDYADFDSWLNCEMFRDLPESKKPMRRHHPGERRQIPKNGKLALWKVVQGLAWMILSTLGMKHFPVKYVLDKDGFPTRSFIFRIHYLFLLGFIHRFKYYAAWTISEGSCILCGLGYNGYDSKTQKIRWDRVRNIDIWTVETAQNTREMLEAWNMNTNKWLKYSVYLRVTKKGKKPGFRSTLFTFLTSAFWHGTRPGYYLTFATGALYQTCGKIYRRNFRPIFLREDGVTPLPSKKIYDLVGIYAIKLAFGYMVQPFIILDLKPSLMVWGSVYFYVHIIVAFSFFLFRGPYAKQVTEFFKSKQPKEIFIRKQKKLEKDISASSPNLGGILKAKIEHEKGKTAEEEEMNLGIPPIELEKWDNAKEDWEDFCKDYKEWRNKNGLEIEEENLSKAFERFKQEFSNAASGSGERVRKMSFSGYSPKPISKKEE</sequence>
<dbReference type="EC" id="2.3.1.23" evidence="8"/>
<dbReference type="EC" id="2.3.1.51" evidence="8 10"/>
<dbReference type="EC" id="2.3.1.n6" evidence="8"/>
<dbReference type="EC" id="2.3.1.n7" evidence="8"/>
<dbReference type="EMBL" id="Z75083">
    <property type="protein sequence ID" value="CAA99384.1"/>
    <property type="molecule type" value="Genomic_DNA"/>
</dbReference>
<dbReference type="EMBL" id="U55021">
    <property type="protein sequence ID" value="AAB47420.1"/>
    <property type="molecule type" value="Genomic_DNA"/>
</dbReference>
<dbReference type="EMBL" id="BK006948">
    <property type="protein sequence ID" value="DAA10947.1"/>
    <property type="molecule type" value="Genomic_DNA"/>
</dbReference>
<dbReference type="PIR" id="S67067">
    <property type="entry name" value="S67067"/>
</dbReference>
<dbReference type="RefSeq" id="NP_014818.1">
    <property type="nucleotide sequence ID" value="NM_001183594.1"/>
</dbReference>
<dbReference type="SMR" id="Q08548"/>
<dbReference type="BioGRID" id="34569">
    <property type="interactions" value="62"/>
</dbReference>
<dbReference type="DIP" id="DIP-5617N"/>
<dbReference type="FunCoup" id="Q08548">
    <property type="interactions" value="628"/>
</dbReference>
<dbReference type="IntAct" id="Q08548">
    <property type="interactions" value="1"/>
</dbReference>
<dbReference type="STRING" id="4932.YOR175C"/>
<dbReference type="SwissLipids" id="SLP:000000083"/>
<dbReference type="iPTMnet" id="Q08548"/>
<dbReference type="PaxDb" id="4932-YOR175C"/>
<dbReference type="PeptideAtlas" id="Q08548"/>
<dbReference type="EnsemblFungi" id="YOR175C_mRNA">
    <property type="protein sequence ID" value="YOR175C"/>
    <property type="gene ID" value="YOR175C"/>
</dbReference>
<dbReference type="GeneID" id="854346"/>
<dbReference type="KEGG" id="sce:YOR175C"/>
<dbReference type="AGR" id="SGD:S000005701"/>
<dbReference type="SGD" id="S000005701">
    <property type="gene designation" value="ALE1"/>
</dbReference>
<dbReference type="VEuPathDB" id="FungiDB:YOR175C"/>
<dbReference type="eggNOG" id="KOG2704">
    <property type="taxonomic scope" value="Eukaryota"/>
</dbReference>
<dbReference type="GeneTree" id="ENSGT01030000234564"/>
<dbReference type="HOGENOM" id="CLU_011340_5_0_1"/>
<dbReference type="InParanoid" id="Q08548"/>
<dbReference type="OMA" id="WHGTRPG"/>
<dbReference type="OrthoDB" id="286734at2759"/>
<dbReference type="BioCyc" id="MetaCyc:G3O-33688-MONOMER"/>
<dbReference type="BioCyc" id="YEAST:G3O-33688-MONOMER"/>
<dbReference type="BRENDA" id="2.3.1.23">
    <property type="organism ID" value="984"/>
</dbReference>
<dbReference type="BRENDA" id="2.3.1.51">
    <property type="organism ID" value="984"/>
</dbReference>
<dbReference type="Reactome" id="R-SCE-1482788">
    <property type="pathway name" value="Acyl chain remodelling of PC"/>
</dbReference>
<dbReference type="Reactome" id="R-SCE-1482801">
    <property type="pathway name" value="Acyl chain remodelling of PS"/>
</dbReference>
<dbReference type="Reactome" id="R-SCE-1482839">
    <property type="pathway name" value="Acyl chain remodelling of PE"/>
</dbReference>
<dbReference type="Reactome" id="R-SCE-1482922">
    <property type="pathway name" value="Acyl chain remodelling of PI"/>
</dbReference>
<dbReference type="SABIO-RK" id="Q08548"/>
<dbReference type="UniPathway" id="UPA00085"/>
<dbReference type="BioGRID-ORCS" id="854346">
    <property type="hits" value="2 hits in 10 CRISPR screens"/>
</dbReference>
<dbReference type="PRO" id="PR:Q08548"/>
<dbReference type="Proteomes" id="UP000002311">
    <property type="component" value="Chromosome XV"/>
</dbReference>
<dbReference type="RNAct" id="Q08548">
    <property type="molecule type" value="protein"/>
</dbReference>
<dbReference type="GO" id="GO:0005783">
    <property type="term" value="C:endoplasmic reticulum"/>
    <property type="evidence" value="ECO:0000314"/>
    <property type="project" value="SGD"/>
</dbReference>
<dbReference type="GO" id="GO:0005789">
    <property type="term" value="C:endoplasmic reticulum membrane"/>
    <property type="evidence" value="ECO:0007669"/>
    <property type="project" value="UniProtKB-SubCell"/>
</dbReference>
<dbReference type="GO" id="GO:0016020">
    <property type="term" value="C:membrane"/>
    <property type="evidence" value="ECO:0000318"/>
    <property type="project" value="GO_Central"/>
</dbReference>
<dbReference type="GO" id="GO:0044233">
    <property type="term" value="C:mitochondria-associated endoplasmic reticulum membrane contact site"/>
    <property type="evidence" value="ECO:0000314"/>
    <property type="project" value="SGD"/>
</dbReference>
<dbReference type="GO" id="GO:0003841">
    <property type="term" value="F:1-acylglycerol-3-phosphate O-acyltransferase activity"/>
    <property type="evidence" value="ECO:0000315"/>
    <property type="project" value="SGD"/>
</dbReference>
<dbReference type="GO" id="GO:0047184">
    <property type="term" value="F:1-acylglycerophosphocholine O-acyltransferase activity"/>
    <property type="evidence" value="ECO:0000315"/>
    <property type="project" value="SGD"/>
</dbReference>
<dbReference type="GO" id="GO:0106262">
    <property type="term" value="F:1-acylglycerophosphoethanolamine O-acyltransferase activity"/>
    <property type="evidence" value="ECO:0007669"/>
    <property type="project" value="RHEA"/>
</dbReference>
<dbReference type="GO" id="GO:0106263">
    <property type="term" value="F:1-acylglycerophosphoserine O-acyltransferase activity"/>
    <property type="evidence" value="ECO:0007669"/>
    <property type="project" value="RHEA"/>
</dbReference>
<dbReference type="GO" id="GO:0071618">
    <property type="term" value="F:lysophosphatidylethanolamine acyltransferase activity"/>
    <property type="evidence" value="ECO:0000314"/>
    <property type="project" value="SGD"/>
</dbReference>
<dbReference type="GO" id="GO:0008374">
    <property type="term" value="F:O-acyltransferase activity"/>
    <property type="evidence" value="ECO:0000314"/>
    <property type="project" value="SGD"/>
</dbReference>
<dbReference type="GO" id="GO:0046474">
    <property type="term" value="P:glycerophospholipid biosynthetic process"/>
    <property type="evidence" value="ECO:0000315"/>
    <property type="project" value="SGD"/>
</dbReference>
<dbReference type="GO" id="GO:0030258">
    <property type="term" value="P:lipid modification"/>
    <property type="evidence" value="ECO:0000318"/>
    <property type="project" value="GO_Central"/>
</dbReference>
<dbReference type="GO" id="GO:0036151">
    <property type="term" value="P:phosphatidylcholine acyl-chain remodeling"/>
    <property type="evidence" value="ECO:0000315"/>
    <property type="project" value="SGD"/>
</dbReference>
<dbReference type="GO" id="GO:0090640">
    <property type="term" value="P:phosphatidylcholine biosynthesis from sn-glycero-3-phosphocholine"/>
    <property type="evidence" value="ECO:0000316"/>
    <property type="project" value="SGD"/>
</dbReference>
<dbReference type="GO" id="GO:0006646">
    <property type="term" value="P:phosphatidylethanolamine biosynthetic process"/>
    <property type="evidence" value="ECO:0000315"/>
    <property type="project" value="SGD"/>
</dbReference>
<dbReference type="InterPro" id="IPR049941">
    <property type="entry name" value="LPLAT_7/PORCN-like"/>
</dbReference>
<dbReference type="InterPro" id="IPR004299">
    <property type="entry name" value="MBOAT_fam"/>
</dbReference>
<dbReference type="PANTHER" id="PTHR13906:SF4">
    <property type="entry name" value="LYSOPHOSPHOLIPID ACYLTRANSFERASE 6"/>
    <property type="match status" value="1"/>
</dbReference>
<dbReference type="PANTHER" id="PTHR13906">
    <property type="entry name" value="PORCUPINE"/>
    <property type="match status" value="1"/>
</dbReference>
<dbReference type="Pfam" id="PF03062">
    <property type="entry name" value="MBOAT"/>
    <property type="match status" value="1"/>
</dbReference>